<keyword id="KW-0002">3D-structure</keyword>
<keyword id="KW-0024">Alternative initiation</keyword>
<keyword id="KW-0106">Calcium</keyword>
<keyword id="KW-1003">Cell membrane</keyword>
<keyword id="KW-0407">Ion channel</keyword>
<keyword id="KW-0406">Ion transport</keyword>
<keyword id="KW-0472">Membrane</keyword>
<keyword id="KW-0479">Metal-binding</keyword>
<keyword id="KW-0630">Potassium</keyword>
<keyword id="KW-0633">Potassium transport</keyword>
<keyword id="KW-1185">Reference proteome</keyword>
<keyword id="KW-0812">Transmembrane</keyword>
<keyword id="KW-1133">Transmembrane helix</keyword>
<keyword id="KW-0813">Transport</keyword>
<feature type="chain" id="PRO_0000035777" description="Calcium-gated potassium channel MthK">
    <location>
        <begin position="1"/>
        <end position="336"/>
    </location>
</feature>
<feature type="topological domain" description="Cytoplasmic">
    <location>
        <begin position="1"/>
        <end position="20"/>
    </location>
</feature>
<feature type="transmembrane region" description="Helical; Name=Outer helix M1">
    <location>
        <begin position="21"/>
        <end position="41"/>
    </location>
</feature>
<feature type="topological domain" description="Extracellular">
    <location>
        <begin position="42"/>
        <end position="48"/>
    </location>
</feature>
<feature type="intramembrane region" description="Helical; Pore-forming" evidence="1">
    <location>
        <begin position="49"/>
        <end position="58"/>
    </location>
</feature>
<feature type="intramembrane region" description="Pore-forming" evidence="1">
    <location>
        <begin position="59"/>
        <end position="64"/>
    </location>
</feature>
<feature type="topological domain" description="Extracellular">
    <location>
        <begin position="65"/>
        <end position="69"/>
    </location>
</feature>
<feature type="transmembrane region" description="Helical; Name=Inner helix M2">
    <location>
        <begin position="70"/>
        <end position="95"/>
    </location>
</feature>
<feature type="topological domain" description="Cytoplasmic">
    <location>
        <begin position="96"/>
        <end position="106"/>
    </location>
</feature>
<feature type="domain" description="RCK N-terminal" evidence="2">
    <location>
        <begin position="115"/>
        <end position="230"/>
    </location>
</feature>
<feature type="domain" description="RCK C-terminal" evidence="3">
    <location>
        <begin position="252"/>
        <end position="336"/>
    </location>
</feature>
<feature type="short sequence motif" description="Selectivity filter">
    <location>
        <begin position="59"/>
        <end position="64"/>
    </location>
</feature>
<feature type="binding site">
    <location>
        <position position="184"/>
    </location>
    <ligand>
        <name>Ca(2+)</name>
        <dbReference type="ChEBI" id="CHEBI:29108"/>
    </ligand>
</feature>
<feature type="binding site">
    <location>
        <position position="210"/>
    </location>
    <ligand>
        <name>Ca(2+)</name>
        <dbReference type="ChEBI" id="CHEBI:29108"/>
    </ligand>
</feature>
<feature type="binding site">
    <location>
        <position position="212"/>
    </location>
    <ligand>
        <name>Ca(2+)</name>
        <dbReference type="ChEBI" id="CHEBI:29108"/>
    </ligand>
</feature>
<feature type="splice variant" id="VSP_018901" description="In isoform Soluble." evidence="5">
    <location>
        <begin position="1"/>
        <end position="106"/>
    </location>
</feature>
<feature type="mutagenesis site" description="Elimination of the 26 kDa product and reduced levels of channel expression." evidence="4">
    <original>M</original>
    <variation>I</variation>
    <location>
        <position position="107"/>
    </location>
</feature>
<feature type="mutagenesis site" description="At high calcium concentration, mean open time is short and mean closed time is long compared with wild-type." evidence="4">
    <original>D</original>
    <variation>N</variation>
    <location>
        <position position="184"/>
    </location>
</feature>
<feature type="helix" evidence="9">
    <location>
        <begin position="20"/>
        <end position="42"/>
    </location>
</feature>
<feature type="helix" evidence="9">
    <location>
        <begin position="46"/>
        <end position="57"/>
    </location>
</feature>
<feature type="strand" evidence="10">
    <location>
        <begin position="63"/>
        <end position="65"/>
    </location>
</feature>
<feature type="helix" evidence="9">
    <location>
        <begin position="70"/>
        <end position="98"/>
    </location>
</feature>
<feature type="turn" evidence="12">
    <location>
        <begin position="105"/>
        <end position="107"/>
    </location>
</feature>
<feature type="helix" evidence="13">
    <location>
        <begin position="113"/>
        <end position="116"/>
    </location>
</feature>
<feature type="strand" evidence="6">
    <location>
        <begin position="117"/>
        <end position="122"/>
    </location>
</feature>
<feature type="helix" evidence="6">
    <location>
        <begin position="125"/>
        <end position="133"/>
    </location>
</feature>
<feature type="turn" evidence="11">
    <location>
        <begin position="134"/>
        <end position="136"/>
    </location>
</feature>
<feature type="strand" evidence="6">
    <location>
        <begin position="137"/>
        <end position="144"/>
    </location>
</feature>
<feature type="helix" evidence="6">
    <location>
        <begin position="146"/>
        <end position="148"/>
    </location>
</feature>
<feature type="helix" evidence="6">
    <location>
        <begin position="149"/>
        <end position="154"/>
    </location>
</feature>
<feature type="strand" evidence="6">
    <location>
        <begin position="158"/>
        <end position="162"/>
    </location>
</feature>
<feature type="helix" evidence="6">
    <location>
        <begin position="167"/>
        <end position="172"/>
    </location>
</feature>
<feature type="helix" evidence="12">
    <location>
        <begin position="175"/>
        <end position="177"/>
    </location>
</feature>
<feature type="strand" evidence="6">
    <location>
        <begin position="179"/>
        <end position="183"/>
    </location>
</feature>
<feature type="helix" evidence="6">
    <location>
        <begin position="188"/>
        <end position="201"/>
    </location>
</feature>
<feature type="strand" evidence="6">
    <location>
        <begin position="203"/>
        <end position="210"/>
    </location>
</feature>
<feature type="helix" evidence="6">
    <location>
        <begin position="214"/>
        <end position="216"/>
    </location>
</feature>
<feature type="helix" evidence="6">
    <location>
        <begin position="217"/>
        <end position="223"/>
    </location>
</feature>
<feature type="strand" evidence="6">
    <location>
        <begin position="226"/>
        <end position="229"/>
    </location>
</feature>
<feature type="helix" evidence="6">
    <location>
        <begin position="231"/>
        <end position="241"/>
    </location>
</feature>
<feature type="turn" evidence="7">
    <location>
        <begin position="242"/>
        <end position="245"/>
    </location>
</feature>
<feature type="helix" evidence="6">
    <location>
        <begin position="247"/>
        <end position="256"/>
    </location>
</feature>
<feature type="strand" evidence="8">
    <location>
        <begin position="257"/>
        <end position="261"/>
    </location>
</feature>
<feature type="strand" evidence="6">
    <location>
        <begin position="263"/>
        <end position="268"/>
    </location>
</feature>
<feature type="strand" evidence="7">
    <location>
        <begin position="271"/>
        <end position="273"/>
    </location>
</feature>
<feature type="turn" evidence="6">
    <location>
        <begin position="274"/>
        <end position="277"/>
    </location>
</feature>
<feature type="helix" evidence="6">
    <location>
        <begin position="280"/>
        <end position="283"/>
    </location>
</feature>
<feature type="helix" evidence="6">
    <location>
        <begin position="285"/>
        <end position="289"/>
    </location>
</feature>
<feature type="strand" evidence="6">
    <location>
        <begin position="292"/>
        <end position="298"/>
    </location>
</feature>
<feature type="strand" evidence="6">
    <location>
        <begin position="301"/>
        <end position="305"/>
    </location>
</feature>
<feature type="strand" evidence="6">
    <location>
        <begin position="317"/>
        <end position="322"/>
    </location>
</feature>
<feature type="helix" evidence="6">
    <location>
        <begin position="324"/>
        <end position="334"/>
    </location>
</feature>
<accession>O27564</accession>
<sequence length="336" mass="37314">MVLVIEIIRKHLPRVLKVPATRILLLVLAVIIYGTAGFHFIEGESWTVSLYWTFVTIATVGYGDYSPSTPLGMYFTVTLIVLGIGTFAVAVERLLEFLINREQMKLMGLIDVAKSRHVVICGWSESTLECLRELRGSEVFVLAEDENVRKKVLRSGANFVHGDPTRVSDLEKANVRGARAVIVDLESDSETIHCILGIRKIDESVRIIAEAERYENIEQLRMAGADQVISPFVISGRLMSRSIDDGYEAMFVQDVLAEESTRRMVEVPIPEGSKLEGVSVLDADIHDVTGVIIIGVGRGDELIIDPPRDYSFRAGDIILGIGKPEEIERLKNYISA</sequence>
<name>MTHK_METTH</name>
<evidence type="ECO:0000255" key="1"/>
<evidence type="ECO:0000255" key="2">
    <source>
        <dbReference type="PROSITE-ProRule" id="PRU00543"/>
    </source>
</evidence>
<evidence type="ECO:0000255" key="3">
    <source>
        <dbReference type="PROSITE-ProRule" id="PRU00544"/>
    </source>
</evidence>
<evidence type="ECO:0000269" key="4">
    <source>
    </source>
</evidence>
<evidence type="ECO:0000305" key="5"/>
<evidence type="ECO:0007829" key="6">
    <source>
        <dbReference type="PDB" id="2AEF"/>
    </source>
</evidence>
<evidence type="ECO:0007829" key="7">
    <source>
        <dbReference type="PDB" id="2FY8"/>
    </source>
</evidence>
<evidence type="ECO:0007829" key="8">
    <source>
        <dbReference type="PDB" id="2OGU"/>
    </source>
</evidence>
<evidence type="ECO:0007829" key="9">
    <source>
        <dbReference type="PDB" id="3LDC"/>
    </source>
</evidence>
<evidence type="ECO:0007829" key="10">
    <source>
        <dbReference type="PDB" id="3LDD"/>
    </source>
</evidence>
<evidence type="ECO:0007829" key="11">
    <source>
        <dbReference type="PDB" id="4L75"/>
    </source>
</evidence>
<evidence type="ECO:0007829" key="12">
    <source>
        <dbReference type="PDB" id="5BKI"/>
    </source>
</evidence>
<evidence type="ECO:0007829" key="13">
    <source>
        <dbReference type="PDB" id="6OLY"/>
    </source>
</evidence>
<organism>
    <name type="scientific">Methanothermobacter thermautotrophicus (strain ATCC 29096 / DSM 1053 / JCM 10044 / NBRC 100330 / Delta H)</name>
    <name type="common">Methanobacterium thermoautotrophicum</name>
    <dbReference type="NCBI Taxonomy" id="187420"/>
    <lineage>
        <taxon>Archaea</taxon>
        <taxon>Methanobacteriati</taxon>
        <taxon>Methanobacteriota</taxon>
        <taxon>Methanomada group</taxon>
        <taxon>Methanobacteria</taxon>
        <taxon>Methanobacteriales</taxon>
        <taxon>Methanobacteriaceae</taxon>
        <taxon>Methanothermobacter</taxon>
    </lineage>
</organism>
<gene>
    <name type="primary">mthK</name>
    <name type="ordered locus">MTH_1520</name>
</gene>
<dbReference type="EMBL" id="AE000666">
    <property type="protein sequence ID" value="AAB85995.1"/>
    <property type="molecule type" value="Genomic_DNA"/>
</dbReference>
<dbReference type="PIR" id="H69069">
    <property type="entry name" value="H69069"/>
</dbReference>
<dbReference type="RefSeq" id="WP_010877130.1">
    <molecule id="O27564-1"/>
    <property type="nucleotide sequence ID" value="NC_000916.1"/>
</dbReference>
<dbReference type="PDB" id="1LNQ">
    <property type="method" value="X-ray"/>
    <property type="resolution" value="3.30 A"/>
    <property type="chains" value="A/B/C/D/E/F/G/H=1-336"/>
</dbReference>
<dbReference type="PDB" id="2AEF">
    <property type="method" value="X-ray"/>
    <property type="resolution" value="1.70 A"/>
    <property type="chains" value="A/B=107-336"/>
</dbReference>
<dbReference type="PDB" id="2AEJ">
    <property type="method" value="X-ray"/>
    <property type="resolution" value="2.10 A"/>
    <property type="chains" value="A/B=107-336"/>
</dbReference>
<dbReference type="PDB" id="2AEM">
    <property type="method" value="X-ray"/>
    <property type="resolution" value="2.80 A"/>
    <property type="chains" value="A=107-336"/>
</dbReference>
<dbReference type="PDB" id="2FY8">
    <property type="method" value="X-ray"/>
    <property type="resolution" value="2.79 A"/>
    <property type="chains" value="A/B/C/D/E/F/G/H=107-336"/>
</dbReference>
<dbReference type="PDB" id="2OGU">
    <property type="method" value="X-ray"/>
    <property type="resolution" value="3.23 A"/>
    <property type="chains" value="A=107-336"/>
</dbReference>
<dbReference type="PDB" id="3KXD">
    <property type="method" value="X-ray"/>
    <property type="resolution" value="2.20 A"/>
    <property type="chains" value="A/B=116-336"/>
</dbReference>
<dbReference type="PDB" id="3LDC">
    <property type="method" value="X-ray"/>
    <property type="resolution" value="1.45 A"/>
    <property type="chains" value="A=18-99"/>
</dbReference>
<dbReference type="PDB" id="3LDD">
    <property type="method" value="X-ray"/>
    <property type="resolution" value="1.45 A"/>
    <property type="chains" value="A=18-99"/>
</dbReference>
<dbReference type="PDB" id="3LDE">
    <property type="method" value="X-ray"/>
    <property type="resolution" value="2.21 A"/>
    <property type="chains" value="A=18-99"/>
</dbReference>
<dbReference type="PDB" id="3OUS">
    <property type="method" value="X-ray"/>
    <property type="resolution" value="1.75 A"/>
    <property type="chains" value="A=18-99"/>
</dbReference>
<dbReference type="PDB" id="3R65">
    <property type="method" value="X-ray"/>
    <property type="resolution" value="1.80 A"/>
    <property type="chains" value="A=18-99"/>
</dbReference>
<dbReference type="PDB" id="3RBX">
    <property type="method" value="X-ray"/>
    <property type="resolution" value="2.80 A"/>
    <property type="chains" value="A/B/C/D/E/F=107-336"/>
</dbReference>
<dbReference type="PDB" id="3RBZ">
    <property type="method" value="X-ray"/>
    <property type="resolution" value="3.40 A"/>
    <property type="chains" value="A/B/C/D=1-336"/>
</dbReference>
<dbReference type="PDB" id="4EI2">
    <property type="method" value="X-ray"/>
    <property type="resolution" value="3.11 A"/>
    <property type="chains" value="A/B/C/D/E/F/G/H/I/J/K/L/M/N/O/P=107-336"/>
</dbReference>
<dbReference type="PDB" id="4HYO">
    <property type="method" value="X-ray"/>
    <property type="resolution" value="1.65 A"/>
    <property type="chains" value="A/B/C/D/E/F/G/H=11-101"/>
</dbReference>
<dbReference type="PDB" id="4HZ3">
    <property type="method" value="X-ray"/>
    <property type="resolution" value="1.70 A"/>
    <property type="chains" value="A/B/C/D/E/F/G/H=11-101"/>
</dbReference>
<dbReference type="PDB" id="4L73">
    <property type="method" value="X-ray"/>
    <property type="resolution" value="2.50 A"/>
    <property type="chains" value="A/B=107-336"/>
</dbReference>
<dbReference type="PDB" id="4L74">
    <property type="method" value="X-ray"/>
    <property type="resolution" value="1.84 A"/>
    <property type="chains" value="A/B=107-336"/>
</dbReference>
<dbReference type="PDB" id="4L75">
    <property type="method" value="X-ray"/>
    <property type="resolution" value="2.39 A"/>
    <property type="chains" value="A/B/C/D/E/F=107-336"/>
</dbReference>
<dbReference type="PDB" id="4L76">
    <property type="method" value="X-ray"/>
    <property type="resolution" value="2.99 A"/>
    <property type="chains" value="A/B/C/D/E/F=107-336"/>
</dbReference>
<dbReference type="PDB" id="4QE7">
    <property type="method" value="X-ray"/>
    <property type="resolution" value="2.40 A"/>
    <property type="chains" value="A=19-99"/>
</dbReference>
<dbReference type="PDB" id="4QE9">
    <property type="method" value="X-ray"/>
    <property type="resolution" value="2.15 A"/>
    <property type="chains" value="A=18-100"/>
</dbReference>
<dbReference type="PDB" id="4RO0">
    <property type="method" value="X-ray"/>
    <property type="resolution" value="3.18 A"/>
    <property type="chains" value="A/B/C/D/E/F/G/H/I/J/K/L/M/N/O/P/Q/R/S/T/a/b/c/d/e/f/g/h/i/j=107-336"/>
</dbReference>
<dbReference type="PDB" id="5BKI">
    <property type="method" value="EM"/>
    <property type="resolution" value="3.10 A"/>
    <property type="chains" value="A/B/C/D/E/F/G/H=1-336"/>
</dbReference>
<dbReference type="PDB" id="5BKJ">
    <property type="method" value="EM"/>
    <property type="resolution" value="3.50 A"/>
    <property type="chains" value="A/B/C/D/E/F/G/H=1-336"/>
</dbReference>
<dbReference type="PDB" id="5BKK">
    <property type="method" value="EM"/>
    <property type="resolution" value="3.50 A"/>
    <property type="chains" value="A/B/C/D/E/F/G/H=1-336"/>
</dbReference>
<dbReference type="PDB" id="6OLY">
    <property type="method" value="X-ray"/>
    <property type="resolution" value="3.11 A"/>
    <property type="chains" value="A/B/C/D=1-336"/>
</dbReference>
<dbReference type="PDB" id="6U5N">
    <property type="method" value="EM"/>
    <property type="resolution" value="3.20 A"/>
    <property type="chains" value="A/B/C/D/E/F/G/H=1-336"/>
</dbReference>
<dbReference type="PDB" id="6U5P">
    <property type="method" value="EM"/>
    <property type="resolution" value="3.30 A"/>
    <property type="chains" value="A/B/C/D/E/F/G/H=1-336"/>
</dbReference>
<dbReference type="PDB" id="6U5R">
    <property type="method" value="EM"/>
    <property type="resolution" value="3.60 A"/>
    <property type="chains" value="A/B/C/D/E/F/G/H=1-336"/>
</dbReference>
<dbReference type="PDB" id="6U68">
    <property type="method" value="EM"/>
    <property type="resolution" value="4.50 A"/>
    <property type="chains" value="A/B/C/D/E/F/G/H=1-336"/>
</dbReference>
<dbReference type="PDB" id="6U6D">
    <property type="method" value="EM"/>
    <property type="resolution" value="3.60 A"/>
    <property type="chains" value="A/B/C/D/E/F/G/H=1-336"/>
</dbReference>
<dbReference type="PDB" id="6U6E">
    <property type="method" value="EM"/>
    <property type="resolution" value="6.30 A"/>
    <property type="chains" value="A/B/C/D/E/F/G/H=1-336"/>
</dbReference>
<dbReference type="PDB" id="6U6H">
    <property type="method" value="EM"/>
    <property type="resolution" value="5.00 A"/>
    <property type="chains" value="A/B/C/D/E/F/G/H=1-336"/>
</dbReference>
<dbReference type="PDB" id="6U9P">
    <property type="method" value="X-ray"/>
    <property type="resolution" value="1.65 A"/>
    <property type="chains" value="A=18-99"/>
</dbReference>
<dbReference type="PDB" id="6U9T">
    <property type="method" value="X-ray"/>
    <property type="resolution" value="1.55 A"/>
    <property type="chains" value="A=18-99"/>
</dbReference>
<dbReference type="PDB" id="6U9Y">
    <property type="method" value="X-ray"/>
    <property type="resolution" value="1.80 A"/>
    <property type="chains" value="A=18-99"/>
</dbReference>
<dbReference type="PDB" id="6U9Z">
    <property type="method" value="X-ray"/>
    <property type="resolution" value="1.95 A"/>
    <property type="chains" value="A=18-99"/>
</dbReference>
<dbReference type="PDB" id="6UWN">
    <property type="method" value="EM"/>
    <property type="resolution" value="3.50 A"/>
    <property type="chains" value="A/B/C/D/E/F/G/H=1-336"/>
</dbReference>
<dbReference type="PDB" id="6UX4">
    <property type="method" value="EM"/>
    <property type="resolution" value="3.50 A"/>
    <property type="chains" value="A/B/C/D/E/F/G/H=1-336"/>
</dbReference>
<dbReference type="PDB" id="6UX7">
    <property type="method" value="EM"/>
    <property type="resolution" value="6.70 A"/>
    <property type="chains" value="A/B/C/D/E/F/G/H=1-336"/>
</dbReference>
<dbReference type="PDB" id="6UXA">
    <property type="method" value="EM"/>
    <property type="resolution" value="4.50 A"/>
    <property type="chains" value="A/B/C/D/E/F/G/H=1-336"/>
</dbReference>
<dbReference type="PDB" id="6UXB">
    <property type="method" value="EM"/>
    <property type="resolution" value="4.90 A"/>
    <property type="chains" value="A/B/C/D/E/F/G/H=1-336"/>
</dbReference>
<dbReference type="PDB" id="8DJB">
    <property type="method" value="EM"/>
    <property type="resolution" value="3.18 A"/>
    <property type="chains" value="A/B/C/D/E/F/G/H=1-336"/>
</dbReference>
<dbReference type="PDB" id="8FZ7">
    <property type="method" value="EM"/>
    <property type="resolution" value="2.88 A"/>
    <property type="chains" value="A/B/C/D/E/F/G/H=1-336"/>
</dbReference>
<dbReference type="PDBsum" id="1LNQ"/>
<dbReference type="PDBsum" id="2AEF"/>
<dbReference type="PDBsum" id="2AEJ"/>
<dbReference type="PDBsum" id="2AEM"/>
<dbReference type="PDBsum" id="2FY8"/>
<dbReference type="PDBsum" id="2OGU"/>
<dbReference type="PDBsum" id="3KXD"/>
<dbReference type="PDBsum" id="3LDC"/>
<dbReference type="PDBsum" id="3LDD"/>
<dbReference type="PDBsum" id="3LDE"/>
<dbReference type="PDBsum" id="3OUS"/>
<dbReference type="PDBsum" id="3R65"/>
<dbReference type="PDBsum" id="3RBX"/>
<dbReference type="PDBsum" id="3RBZ"/>
<dbReference type="PDBsum" id="4EI2"/>
<dbReference type="PDBsum" id="4HYO"/>
<dbReference type="PDBsum" id="4HZ3"/>
<dbReference type="PDBsum" id="4L73"/>
<dbReference type="PDBsum" id="4L74"/>
<dbReference type="PDBsum" id="4L75"/>
<dbReference type="PDBsum" id="4L76"/>
<dbReference type="PDBsum" id="4QE7"/>
<dbReference type="PDBsum" id="4QE9"/>
<dbReference type="PDBsum" id="4RO0"/>
<dbReference type="PDBsum" id="5BKI"/>
<dbReference type="PDBsum" id="5BKJ"/>
<dbReference type="PDBsum" id="5BKK"/>
<dbReference type="PDBsum" id="6OLY"/>
<dbReference type="PDBsum" id="6U5N"/>
<dbReference type="PDBsum" id="6U5P"/>
<dbReference type="PDBsum" id="6U5R"/>
<dbReference type="PDBsum" id="6U68"/>
<dbReference type="PDBsum" id="6U6D"/>
<dbReference type="PDBsum" id="6U6E"/>
<dbReference type="PDBsum" id="6U6H"/>
<dbReference type="PDBsum" id="6U9P"/>
<dbReference type="PDBsum" id="6U9T"/>
<dbReference type="PDBsum" id="6U9Y"/>
<dbReference type="PDBsum" id="6U9Z"/>
<dbReference type="PDBsum" id="6UWN"/>
<dbReference type="PDBsum" id="6UX4"/>
<dbReference type="PDBsum" id="6UX7"/>
<dbReference type="PDBsum" id="6UXA"/>
<dbReference type="PDBsum" id="6UXB"/>
<dbReference type="PDBsum" id="8DJB"/>
<dbReference type="PDBsum" id="8FZ7"/>
<dbReference type="EMDB" id="EMD-20650"/>
<dbReference type="EMDB" id="EMD-20652"/>
<dbReference type="EMDB" id="EMD-20653"/>
<dbReference type="EMDB" id="EMD-20662"/>
<dbReference type="EMDB" id="EMD-20663"/>
<dbReference type="EMDB" id="EMD-20664"/>
<dbReference type="EMDB" id="EMD-20665"/>
<dbReference type="EMDB" id="EMD-20925"/>
<dbReference type="EMDB" id="EMD-20929"/>
<dbReference type="EMDB" id="EMD-20930"/>
<dbReference type="EMDB" id="EMD-20931"/>
<dbReference type="EMDB" id="EMD-20932"/>
<dbReference type="EMDB" id="EMD-27459"/>
<dbReference type="EMDB" id="EMD-29605"/>
<dbReference type="EMDB" id="EMD-9405"/>
<dbReference type="EMDB" id="EMD-9406"/>
<dbReference type="EMDB" id="EMD-9407"/>
<dbReference type="SMR" id="O27564"/>
<dbReference type="DIP" id="DIP-37842N"/>
<dbReference type="FunCoup" id="O27564">
    <property type="interactions" value="1"/>
</dbReference>
<dbReference type="TCDB" id="1.A.1.13.2">
    <property type="family name" value="the voltage-gated ion channel (vic) superfamily"/>
</dbReference>
<dbReference type="PaxDb" id="187420-MTH_1520"/>
<dbReference type="EnsemblBacteria" id="AAB85995">
    <property type="protein sequence ID" value="AAB85995"/>
    <property type="gene ID" value="MTH_1520"/>
</dbReference>
<dbReference type="GeneID" id="1471789"/>
<dbReference type="GeneID" id="77402039"/>
<dbReference type="KEGG" id="mth:MTH_1520"/>
<dbReference type="PATRIC" id="fig|187420.15.peg.1483"/>
<dbReference type="HOGENOM" id="CLU_050982_1_0_2"/>
<dbReference type="InParanoid" id="O27564"/>
<dbReference type="EvolutionaryTrace" id="O27564"/>
<dbReference type="Proteomes" id="UP000005223">
    <property type="component" value="Chromosome"/>
</dbReference>
<dbReference type="GO" id="GO:0005886">
    <property type="term" value="C:plasma membrane"/>
    <property type="evidence" value="ECO:0007669"/>
    <property type="project" value="UniProtKB-SubCell"/>
</dbReference>
<dbReference type="GO" id="GO:0042802">
    <property type="term" value="F:identical protein binding"/>
    <property type="evidence" value="ECO:0000353"/>
    <property type="project" value="IntAct"/>
</dbReference>
<dbReference type="GO" id="GO:0046872">
    <property type="term" value="F:metal ion binding"/>
    <property type="evidence" value="ECO:0007669"/>
    <property type="project" value="UniProtKB-KW"/>
</dbReference>
<dbReference type="GO" id="GO:0008324">
    <property type="term" value="F:monoatomic cation transmembrane transporter activity"/>
    <property type="evidence" value="ECO:0007669"/>
    <property type="project" value="InterPro"/>
</dbReference>
<dbReference type="GO" id="GO:0006813">
    <property type="term" value="P:potassium ion transport"/>
    <property type="evidence" value="ECO:0007669"/>
    <property type="project" value="UniProtKB-KW"/>
</dbReference>
<dbReference type="FunFam" id="3.30.70.1450:FF:000036">
    <property type="entry name" value="Calcium-gated potassium channel MthK"/>
    <property type="match status" value="1"/>
</dbReference>
<dbReference type="Gene3D" id="1.10.287.70">
    <property type="match status" value="1"/>
</dbReference>
<dbReference type="Gene3D" id="3.40.50.720">
    <property type="entry name" value="NAD(P)-binding Rossmann-like Domain"/>
    <property type="match status" value="1"/>
</dbReference>
<dbReference type="Gene3D" id="3.30.70.1450">
    <property type="entry name" value="Regulator of K+ conductance, C-terminal domain"/>
    <property type="match status" value="1"/>
</dbReference>
<dbReference type="Gene3D" id="1.20.5.870">
    <property type="entry name" value="Voltage-gated potassium channel"/>
    <property type="match status" value="1"/>
</dbReference>
<dbReference type="InterPro" id="IPR013099">
    <property type="entry name" value="K_chnl_dom"/>
</dbReference>
<dbReference type="InterPro" id="IPR036291">
    <property type="entry name" value="NAD(P)-bd_dom_sf"/>
</dbReference>
<dbReference type="InterPro" id="IPR006037">
    <property type="entry name" value="RCK_C"/>
</dbReference>
<dbReference type="InterPro" id="IPR036721">
    <property type="entry name" value="RCK_C_sf"/>
</dbReference>
<dbReference type="InterPro" id="IPR003148">
    <property type="entry name" value="RCK_N"/>
</dbReference>
<dbReference type="InterPro" id="IPR050721">
    <property type="entry name" value="Trk_Ktr_HKT_K-transport"/>
</dbReference>
<dbReference type="PANTHER" id="PTHR43833">
    <property type="entry name" value="POTASSIUM CHANNEL PROTEIN 2-RELATED-RELATED"/>
    <property type="match status" value="1"/>
</dbReference>
<dbReference type="PANTHER" id="PTHR43833:SF9">
    <property type="entry name" value="POTASSIUM CHANNEL PROTEIN YUGO-RELATED"/>
    <property type="match status" value="1"/>
</dbReference>
<dbReference type="Pfam" id="PF07885">
    <property type="entry name" value="Ion_trans_2"/>
    <property type="match status" value="1"/>
</dbReference>
<dbReference type="Pfam" id="PF02080">
    <property type="entry name" value="TrkA_C"/>
    <property type="match status" value="1"/>
</dbReference>
<dbReference type="Pfam" id="PF02254">
    <property type="entry name" value="TrkA_N"/>
    <property type="match status" value="1"/>
</dbReference>
<dbReference type="SUPFAM" id="SSF51735">
    <property type="entry name" value="NAD(P)-binding Rossmann-fold domains"/>
    <property type="match status" value="1"/>
</dbReference>
<dbReference type="SUPFAM" id="SSF116726">
    <property type="entry name" value="TrkA C-terminal domain-like"/>
    <property type="match status" value="1"/>
</dbReference>
<dbReference type="SUPFAM" id="SSF81324">
    <property type="entry name" value="Voltage-gated potassium channels"/>
    <property type="match status" value="1"/>
</dbReference>
<dbReference type="PROSITE" id="PS51202">
    <property type="entry name" value="RCK_C"/>
    <property type="match status" value="1"/>
</dbReference>
<dbReference type="PROSITE" id="PS51201">
    <property type="entry name" value="RCK_N"/>
    <property type="match status" value="1"/>
</dbReference>
<reference key="1">
    <citation type="journal article" date="1997" name="J. Bacteriol.">
        <title>Complete genome sequence of Methanobacterium thermoautotrophicum deltaH: functional analysis and comparative genomics.</title>
        <authorList>
            <person name="Smith D.R."/>
            <person name="Doucette-Stamm L.A."/>
            <person name="Deloughery C."/>
            <person name="Lee H.-M."/>
            <person name="Dubois J."/>
            <person name="Aldredge T."/>
            <person name="Bashirzadeh R."/>
            <person name="Blakely D."/>
            <person name="Cook R."/>
            <person name="Gilbert K."/>
            <person name="Harrison D."/>
            <person name="Hoang L."/>
            <person name="Keagle P."/>
            <person name="Lumm W."/>
            <person name="Pothier B."/>
            <person name="Qiu D."/>
            <person name="Spadafora R."/>
            <person name="Vicare R."/>
            <person name="Wang Y."/>
            <person name="Wierzbowski J."/>
            <person name="Gibson R."/>
            <person name="Jiwani N."/>
            <person name="Caruso A."/>
            <person name="Bush D."/>
            <person name="Safer H."/>
            <person name="Patwell D."/>
            <person name="Prabhakar S."/>
            <person name="McDougall S."/>
            <person name="Shimer G."/>
            <person name="Goyal A."/>
            <person name="Pietrovski S."/>
            <person name="Church G.M."/>
            <person name="Daniels C.J."/>
            <person name="Mao J.-I."/>
            <person name="Rice P."/>
            <person name="Noelling J."/>
            <person name="Reeve J.N."/>
        </authorList>
    </citation>
    <scope>NUCLEOTIDE SEQUENCE [LARGE SCALE GENOMIC DNA]</scope>
    <source>
        <strain>ATCC 29096 / DSM 1053 / JCM 10044 / NBRC 100330 / Delta H</strain>
    </source>
</reference>
<reference key="2">
    <citation type="journal article" date="2002" name="Nature">
        <title>Crystal structure and mechanism of a calcium-gated potassium channel.</title>
        <authorList>
            <person name="Jiang Y."/>
            <person name="Lee A."/>
            <person name="Chen J."/>
            <person name="Cadene M."/>
            <person name="Chait B.T."/>
            <person name="MacKinnon R."/>
        </authorList>
    </citation>
    <scope>X-RAY CRYSTALLOGRAPHY (3.3 ANGSTROMS)</scope>
    <scope>MUTAGENESIS OF MET-107 AND ASP-184</scope>
</reference>
<protein>
    <recommendedName>
        <fullName>Calcium-gated potassium channel MthK</fullName>
    </recommendedName>
</protein>
<proteinExistence type="evidence at protein level"/>
<comment type="function">
    <text>Calcium-gated potassium channel.</text>
</comment>
<comment type="subunit">
    <text>Homotetramer.</text>
</comment>
<comment type="interaction">
    <interactant intactId="EBI-1101987">
        <id>O27564</id>
    </interactant>
    <interactant intactId="EBI-1101987">
        <id>O27564</id>
        <label>mthK</label>
    </interactant>
    <organismsDiffer>false</organismsDiffer>
    <experiments>3</experiments>
</comment>
<comment type="interaction">
    <interactant intactId="EBI-15621899">
        <id>O27564-1</id>
    </interactant>
    <interactant intactId="EBI-15621899">
        <id>O27564-1</id>
        <label>mthK</label>
    </interactant>
    <organismsDiffer>false</organismsDiffer>
    <experiments>11</experiments>
</comment>
<comment type="interaction">
    <interactant intactId="EBI-15737903">
        <id>O27564-2</id>
    </interactant>
    <interactant intactId="EBI-15737903">
        <id>O27564-2</id>
        <label>mthK</label>
    </interactant>
    <organismsDiffer>false</organismsDiffer>
    <experiments>2</experiments>
</comment>
<comment type="subcellular location">
    <subcellularLocation>
        <location>Cell membrane</location>
        <topology>Multi-pass membrane protein</topology>
    </subcellularLocation>
</comment>
<comment type="alternative products">
    <event type="alternative initiation"/>
    <isoform>
        <id>O27564-1</id>
        <name>1</name>
        <name>Calcium-gated potassium channel</name>
        <sequence type="displayed"/>
    </isoform>
    <isoform>
        <id>O27564-2</id>
        <name>Soluble</name>
        <name>RCK domain</name>
        <sequence type="described" ref="VSP_018901"/>
    </isoform>
</comment>
<comment type="domain">
    <text>The channel is composed of 4 repeated units, each containing a transmembrane pore part and a gating ring part. The gating ring is composed of eight identical RCK (Regulators of K conductance) domains, in an alternating arrangement of one domain from each of the four subunits and four from the intracellular solution. Two protein interfaces between dimers of RCK domains from the pore-forming subunit and from the intracellular solution hold the ring together. One is called the fixed interface and the other the flexible interface. The flexible interface forms a cleft where calcium binds. Upon calcium binding the gating ring undergoes a conformational change that enables it to pull open the inner helices of the pore, allowing ion conduction.</text>
</comment>
<comment type="miscellaneous">
    <text>It is not known whether calcium is the physiological ligand.</text>
</comment>
<comment type="miscellaneous">
    <text>Inhibited by charybdotoxin (CTX), a protein from scorpion venom.</text>
</comment>